<evidence type="ECO:0000250" key="1">
    <source>
        <dbReference type="UniProtKB" id="Q940D0"/>
    </source>
</evidence>
<evidence type="ECO:0000255" key="2">
    <source>
        <dbReference type="PROSITE-ProRule" id="PRU00169"/>
    </source>
</evidence>
<evidence type="ECO:0000255" key="3">
    <source>
        <dbReference type="PROSITE-ProRule" id="PRU00625"/>
    </source>
</evidence>
<evidence type="ECO:0000256" key="4">
    <source>
        <dbReference type="SAM" id="MobiDB-lite"/>
    </source>
</evidence>
<evidence type="ECO:0000269" key="5">
    <source>
    </source>
</evidence>
<evidence type="ECO:0000269" key="6">
    <source>
    </source>
</evidence>
<evidence type="ECO:0000303" key="7">
    <source>
    </source>
</evidence>
<evidence type="ECO:0000303" key="8">
    <source>
    </source>
</evidence>
<evidence type="ECO:0000305" key="9"/>
<evidence type="ECO:0000312" key="10">
    <source>
        <dbReference type="EMBL" id="BAH92613.1"/>
    </source>
</evidence>
<evidence type="ECO:0000312" key="11">
    <source>
        <dbReference type="EMBL" id="CAE02104.2"/>
    </source>
</evidence>
<reference key="1">
    <citation type="journal article" date="2002" name="Nature">
        <title>Sequence and analysis of rice chromosome 4.</title>
        <authorList>
            <person name="Feng Q."/>
            <person name="Zhang Y."/>
            <person name="Hao P."/>
            <person name="Wang S."/>
            <person name="Fu G."/>
            <person name="Huang Y."/>
            <person name="Li Y."/>
            <person name="Zhu J."/>
            <person name="Liu Y."/>
            <person name="Hu X."/>
            <person name="Jia P."/>
            <person name="Zhang Y."/>
            <person name="Zhao Q."/>
            <person name="Ying K."/>
            <person name="Yu S."/>
            <person name="Tang Y."/>
            <person name="Weng Q."/>
            <person name="Zhang L."/>
            <person name="Lu Y."/>
            <person name="Mu J."/>
            <person name="Lu Y."/>
            <person name="Zhang L.S."/>
            <person name="Yu Z."/>
            <person name="Fan D."/>
            <person name="Liu X."/>
            <person name="Lu T."/>
            <person name="Li C."/>
            <person name="Wu Y."/>
            <person name="Sun T."/>
            <person name="Lei H."/>
            <person name="Li T."/>
            <person name="Hu H."/>
            <person name="Guan J."/>
            <person name="Wu M."/>
            <person name="Zhang R."/>
            <person name="Zhou B."/>
            <person name="Chen Z."/>
            <person name="Chen L."/>
            <person name="Jin Z."/>
            <person name="Wang R."/>
            <person name="Yin H."/>
            <person name="Cai Z."/>
            <person name="Ren S."/>
            <person name="Lv G."/>
            <person name="Gu W."/>
            <person name="Zhu G."/>
            <person name="Tu Y."/>
            <person name="Jia J."/>
            <person name="Zhang Y."/>
            <person name="Chen J."/>
            <person name="Kang H."/>
            <person name="Chen X."/>
            <person name="Shao C."/>
            <person name="Sun Y."/>
            <person name="Hu Q."/>
            <person name="Zhang X."/>
            <person name="Zhang W."/>
            <person name="Wang L."/>
            <person name="Ding C."/>
            <person name="Sheng H."/>
            <person name="Gu J."/>
            <person name="Chen S."/>
            <person name="Ni L."/>
            <person name="Zhu F."/>
            <person name="Chen W."/>
            <person name="Lan L."/>
            <person name="Lai Y."/>
            <person name="Cheng Z."/>
            <person name="Gu M."/>
            <person name="Jiang J."/>
            <person name="Li J."/>
            <person name="Hong G."/>
            <person name="Xue Y."/>
            <person name="Han B."/>
        </authorList>
    </citation>
    <scope>NUCLEOTIDE SEQUENCE [LARGE SCALE GENOMIC DNA]</scope>
    <source>
        <strain>cv. Nipponbare</strain>
    </source>
</reference>
<reference key="2">
    <citation type="journal article" date="2005" name="Nature">
        <title>The map-based sequence of the rice genome.</title>
        <authorList>
            <consortium name="International rice genome sequencing project (IRGSP)"/>
        </authorList>
    </citation>
    <scope>NUCLEOTIDE SEQUENCE [LARGE SCALE GENOMIC DNA]</scope>
    <source>
        <strain>cv. Nipponbare</strain>
    </source>
</reference>
<reference key="3">
    <citation type="journal article" date="2008" name="Nucleic Acids Res.">
        <title>The rice annotation project database (RAP-DB): 2008 update.</title>
        <authorList>
            <consortium name="The rice annotation project (RAP)"/>
        </authorList>
    </citation>
    <scope>GENOME REANNOTATION</scope>
    <source>
        <strain>cv. Nipponbare</strain>
    </source>
</reference>
<reference key="4">
    <citation type="journal article" date="2013" name="Rice">
        <title>Improvement of the Oryza sativa Nipponbare reference genome using next generation sequence and optical map data.</title>
        <authorList>
            <person name="Kawahara Y."/>
            <person name="de la Bastide M."/>
            <person name="Hamilton J.P."/>
            <person name="Kanamori H."/>
            <person name="McCombie W.R."/>
            <person name="Ouyang S."/>
            <person name="Schwartz D.C."/>
            <person name="Tanaka T."/>
            <person name="Wu J."/>
            <person name="Zhou S."/>
            <person name="Childs K.L."/>
            <person name="Davidson R.M."/>
            <person name="Lin H."/>
            <person name="Quesada-Ocampo L."/>
            <person name="Vaillancourt B."/>
            <person name="Sakai H."/>
            <person name="Lee S.S."/>
            <person name="Kim J."/>
            <person name="Numa H."/>
            <person name="Itoh T."/>
            <person name="Buell C.R."/>
            <person name="Matsumoto T."/>
        </authorList>
    </citation>
    <scope>GENOME REANNOTATION</scope>
    <source>
        <strain>cv. Nipponbare</strain>
    </source>
</reference>
<reference key="5">
    <citation type="journal article" date="2006" name="Plant Physiol.">
        <title>Whole-genome analysis of Oryza sativa reveals similar architecture of two-component signaling machinery with Arabidopsis.</title>
        <authorList>
            <person name="Pareek A."/>
            <person name="Singh A."/>
            <person name="Kumar M."/>
            <person name="Kushwaha H.R."/>
            <person name="Lynn A.M."/>
            <person name="Singla-Pareek S.L."/>
        </authorList>
    </citation>
    <scope>DISRUPTION PHENOTYPE</scope>
</reference>
<reference key="6">
    <citation type="journal article" date="2007" name="Plant Physiol.">
        <title>Nomenclature for two-component signaling elements of rice.</title>
        <authorList>
            <person name="Schaller G.E."/>
            <person name="Doi K."/>
            <person name="Hwang I."/>
            <person name="Kieber J.J."/>
            <person name="Khurana J.P."/>
            <person name="Kurata N."/>
            <person name="Mizuno T."/>
            <person name="Pareek A."/>
            <person name="Shiu S.H."/>
            <person name="Wu P."/>
            <person name="Yip W.K."/>
        </authorList>
    </citation>
    <scope>GENE FAMILY</scope>
    <scope>NOMENCLATURE</scope>
</reference>
<reference key="7">
    <citation type="journal article" date="2012" name="Plant Physiol.">
        <title>Characterization of genes involved in cytokinin signaling and metabolism from rice.</title>
        <authorList>
            <person name="Tsai Y.C."/>
            <person name="Weir N.R."/>
            <person name="Hill K."/>
            <person name="Zhang W."/>
            <person name="Kim H.J."/>
            <person name="Shiu S.H."/>
            <person name="Schaller G.E."/>
            <person name="Kieber J.J."/>
        </authorList>
    </citation>
    <scope>FUNCTION</scope>
    <scope>SUBCELLULAR LOCATION</scope>
</reference>
<organism>
    <name type="scientific">Oryza sativa subsp. japonica</name>
    <name type="common">Rice</name>
    <dbReference type="NCBI Taxonomy" id="39947"/>
    <lineage>
        <taxon>Eukaryota</taxon>
        <taxon>Viridiplantae</taxon>
        <taxon>Streptophyta</taxon>
        <taxon>Embryophyta</taxon>
        <taxon>Tracheophyta</taxon>
        <taxon>Spermatophyta</taxon>
        <taxon>Magnoliopsida</taxon>
        <taxon>Liliopsida</taxon>
        <taxon>Poales</taxon>
        <taxon>Poaceae</taxon>
        <taxon>BOP clade</taxon>
        <taxon>Oryzoideae</taxon>
        <taxon>Oryzeae</taxon>
        <taxon>Oryzinae</taxon>
        <taxon>Oryza</taxon>
        <taxon>Oryza sativa</taxon>
    </lineage>
</organism>
<proteinExistence type="inferred from homology"/>
<feature type="chain" id="PRO_0000433853" description="Two-component response regulator ORR29">
    <location>
        <begin position="1"/>
        <end position="390"/>
    </location>
</feature>
<feature type="domain" description="Response regulatory" evidence="2">
    <location>
        <begin position="13"/>
        <end position="130"/>
    </location>
</feature>
<feature type="DNA-binding region" description="Myb-like GARP" evidence="3">
    <location>
        <begin position="169"/>
        <end position="226"/>
    </location>
</feature>
<feature type="region of interest" description="Disordered" evidence="4">
    <location>
        <begin position="233"/>
        <end position="271"/>
    </location>
</feature>
<feature type="region of interest" description="Disordered" evidence="4">
    <location>
        <begin position="303"/>
        <end position="339"/>
    </location>
</feature>
<feature type="compositionally biased region" description="Polar residues" evidence="4">
    <location>
        <begin position="257"/>
        <end position="271"/>
    </location>
</feature>
<feature type="modified residue" description="4-aspartylphosphate" evidence="2">
    <location>
        <position position="65"/>
    </location>
</feature>
<dbReference type="EMBL" id="AL662963">
    <property type="protein sequence ID" value="CAE02104.2"/>
    <property type="status" value="ALT_INIT"/>
    <property type="molecule type" value="Genomic_DNA"/>
</dbReference>
<dbReference type="EMBL" id="AP008210">
    <property type="protein sequence ID" value="BAH92613.1"/>
    <property type="status" value="ALT_SEQ"/>
    <property type="molecule type" value="Genomic_DNA"/>
</dbReference>
<dbReference type="EMBL" id="AP014960">
    <property type="status" value="NOT_ANNOTATED_CDS"/>
    <property type="molecule type" value="Genomic_DNA"/>
</dbReference>
<dbReference type="SMR" id="Q7XS69"/>
<dbReference type="FunCoup" id="Q7XS69">
    <property type="interactions" value="17"/>
</dbReference>
<dbReference type="STRING" id="39947.Q7XS69"/>
<dbReference type="PaxDb" id="39947-Q7XS69"/>
<dbReference type="KEGG" id="dosa:Os04g0348800"/>
<dbReference type="eggNOG" id="KOG1601">
    <property type="taxonomic scope" value="Eukaryota"/>
</dbReference>
<dbReference type="InParanoid" id="Q7XS69"/>
<dbReference type="Proteomes" id="UP000000763">
    <property type="component" value="Chromosome 4"/>
</dbReference>
<dbReference type="Proteomes" id="UP000059680">
    <property type="component" value="Chromosome 4"/>
</dbReference>
<dbReference type="GO" id="GO:0005829">
    <property type="term" value="C:cytosol"/>
    <property type="evidence" value="ECO:0000314"/>
    <property type="project" value="UniProtKB"/>
</dbReference>
<dbReference type="GO" id="GO:0005634">
    <property type="term" value="C:nucleus"/>
    <property type="evidence" value="ECO:0000314"/>
    <property type="project" value="UniProtKB"/>
</dbReference>
<dbReference type="GO" id="GO:0003677">
    <property type="term" value="F:DNA binding"/>
    <property type="evidence" value="ECO:0007669"/>
    <property type="project" value="UniProtKB-KW"/>
</dbReference>
<dbReference type="GO" id="GO:0009736">
    <property type="term" value="P:cytokinin-activated signaling pathway"/>
    <property type="evidence" value="ECO:0000314"/>
    <property type="project" value="UniProtKB"/>
</dbReference>
<dbReference type="GO" id="GO:0000160">
    <property type="term" value="P:phosphorelay signal transduction system"/>
    <property type="evidence" value="ECO:0007669"/>
    <property type="project" value="UniProtKB-KW"/>
</dbReference>
<dbReference type="CDD" id="cd17584">
    <property type="entry name" value="REC_typeB_ARR-like"/>
    <property type="match status" value="1"/>
</dbReference>
<dbReference type="FunFam" id="1.10.10.60:FF:000007">
    <property type="entry name" value="Two-component response regulator"/>
    <property type="match status" value="1"/>
</dbReference>
<dbReference type="FunFam" id="3.40.50.2300:FF:000448">
    <property type="entry name" value="Two-component response regulator ORR29"/>
    <property type="match status" value="1"/>
</dbReference>
<dbReference type="Gene3D" id="3.40.50.2300">
    <property type="match status" value="1"/>
</dbReference>
<dbReference type="Gene3D" id="1.10.10.60">
    <property type="entry name" value="Homeodomain-like"/>
    <property type="match status" value="1"/>
</dbReference>
<dbReference type="InterPro" id="IPR045279">
    <property type="entry name" value="ARR-like"/>
</dbReference>
<dbReference type="InterPro" id="IPR011006">
    <property type="entry name" value="CheY-like_superfamily"/>
</dbReference>
<dbReference type="InterPro" id="IPR009057">
    <property type="entry name" value="Homeodomain-like_sf"/>
</dbReference>
<dbReference type="InterPro" id="IPR006447">
    <property type="entry name" value="Myb_dom_plants"/>
</dbReference>
<dbReference type="InterPro" id="IPR001789">
    <property type="entry name" value="Sig_transdc_resp-reg_receiver"/>
</dbReference>
<dbReference type="NCBIfam" id="TIGR01557">
    <property type="entry name" value="myb_SHAQKYF"/>
    <property type="match status" value="1"/>
</dbReference>
<dbReference type="PANTHER" id="PTHR43874">
    <property type="entry name" value="TWO-COMPONENT RESPONSE REGULATOR"/>
    <property type="match status" value="1"/>
</dbReference>
<dbReference type="PANTHER" id="PTHR43874:SF92">
    <property type="entry name" value="TWO-COMPONENT RESPONSE REGULATOR ORR28"/>
    <property type="match status" value="1"/>
</dbReference>
<dbReference type="Pfam" id="PF00072">
    <property type="entry name" value="Response_reg"/>
    <property type="match status" value="1"/>
</dbReference>
<dbReference type="SMART" id="SM00448">
    <property type="entry name" value="REC"/>
    <property type="match status" value="1"/>
</dbReference>
<dbReference type="SUPFAM" id="SSF52172">
    <property type="entry name" value="CheY-like"/>
    <property type="match status" value="1"/>
</dbReference>
<dbReference type="SUPFAM" id="SSF46689">
    <property type="entry name" value="Homeodomain-like"/>
    <property type="match status" value="1"/>
</dbReference>
<dbReference type="PROSITE" id="PS50110">
    <property type="entry name" value="RESPONSE_REGULATORY"/>
    <property type="match status" value="1"/>
</dbReference>
<name>ORR29_ORYSJ</name>
<comment type="function">
    <text evidence="1 6">Transcriptional activator that binds specific DNA sequence. Functions as a response regulator involved in His-to-Asp phosphorelay signal transduction system. Phosphorylation of the Asp residue in the receiver domain activates the ability of the protein to promote the transcription of target genes. May directly activate some type-A response regulators in response to cytokinins (By similarity). Functions as a response regulator in response to cytokinins (PubMed:22383541).</text>
</comment>
<comment type="subcellular location">
    <subcellularLocation>
        <location evidence="6">Cytoplasm</location>
        <location evidence="6">Cytosol</location>
    </subcellularLocation>
    <subcellularLocation>
        <location evidence="6">Nucleus</location>
    </subcellularLocation>
</comment>
<comment type="PTM">
    <text evidence="9">Two-component system major event consists of a His-to-Asp phosphorelay between a sensor histidine kinase (HK) and a response regulator (RR). In plants, the His-to-Asp phosphorelay involves an additional intermediate named Histidine-containing phosphotransfer protein (HPt). This multistep phosphorelay consists of a His-Asp-His-Asp sequential transfer of a phosphate group between first a His and an Asp of the HK protein, followed by the transfer to a conserved His of the HPt protein and finally the transfer to an Asp in the receiver domain of the RR protein.</text>
</comment>
<comment type="disruption phenotype">
    <text evidence="5">Dwarf, narrow leaf, lesion mimic, low tillering and late heading phenotypes.</text>
</comment>
<comment type="similarity">
    <text evidence="9">Belongs to the ARR family. Type-B subfamily.</text>
</comment>
<comment type="sequence caution" evidence="9">
    <conflict type="erroneous gene model prediction">
        <sequence resource="EMBL-CDS" id="BAH92613"/>
    </conflict>
</comment>
<comment type="sequence caution" evidence="9">
    <conflict type="erroneous initiation">
        <sequence resource="EMBL-CDS" id="CAE02104"/>
    </conflict>
    <text>Truncated N-terminus.</text>
</comment>
<gene>
    <name evidence="8" type="primary">RR29</name>
    <name evidence="10" type="ordered locus">Os04g0348800</name>
    <name evidence="9" type="ordered locus">LOC_Os04g28130</name>
    <name evidence="11" type="ORF">OSJNBa0020I02.17</name>
</gene>
<sequence length="390" mass="43327">MAQKEGLPAGRLSAMVIDEDKCHADSTSYMLSAELNFSVTVFTSPIKALDFLQNHAEGVDLVLADVHMEEMNGFDFLKVARELHKSIQVIMMSTETTMYTMKRCVKLGAQFLVNKPLDAGTIKNLWQYVDLKVLRMEKIKDLLQGIGDESTCANETNSLAENPKNDTKKKYYLMWTPHLQKKFLHALQILGKDASPKNIKKIMGVDNIDCRQIAAHLQKHRLRLTKDLKKASFTTDTSKDESNSRIGPAESHHVCRNASTLQPRSNTQPTETTMQILSEDAEYDDVYAAMRRALQYGIVFDESKHSSDPSGDEDEQVVVGGDQDGCANEANDIDSSGDHHQVAAVVTKPCNANASQEIINKMTNSDGMQATKGSKAAVFRLVDYSESDSD</sequence>
<keyword id="KW-0010">Activator</keyword>
<keyword id="KW-0932">Cytokinin signaling pathway</keyword>
<keyword id="KW-0963">Cytoplasm</keyword>
<keyword id="KW-0238">DNA-binding</keyword>
<keyword id="KW-0539">Nucleus</keyword>
<keyword id="KW-0597">Phosphoprotein</keyword>
<keyword id="KW-1185">Reference proteome</keyword>
<keyword id="KW-0804">Transcription</keyword>
<keyword id="KW-0805">Transcription regulation</keyword>
<keyword id="KW-0902">Two-component regulatory system</keyword>
<accession>Q7XS69</accession>
<accession>C7J105</accession>
<protein>
    <recommendedName>
        <fullName evidence="9">Two-component response regulator ORR29</fullName>
    </recommendedName>
    <alternativeName>
        <fullName evidence="7">OsRRB7</fullName>
    </alternativeName>
</protein>